<sequence>MDNHMLNRISKSPILPVVSYCMASILMTLTNKYVLSSPGYNMNFLLLTVQSTVCVAAIGILKRLKVINYRDFDFREAKFWFPISFLLVAMIYTASKALQFLSVPVYTIFKNLTIIIIAYGEVLWFGGHVTALTLFSFGLMVLSSIVAAWADIQSSSFASQTLNSGYLWMVLNCLTNAAFVLAMRKRIKLTNFRDFDTMFYNNLLSIPVLVICTLFTEDWSAENIAQNFPPDAKFGVLMAMAISGVSSVGISYTSAWCVRVTSSTTYSMVGALNKLPLAIAGLVFFDAPITFGSVTAILLGFISGVVYAVAKSQQQRQKDPATILPMTHNPVSASSQSMRDSLSKS</sequence>
<feature type="chain" id="PRO_0000315880" description="GDP-mannose transporter">
    <location>
        <begin position="1"/>
        <end position="345"/>
    </location>
</feature>
<feature type="topological domain" description="Cytoplasmic" evidence="1">
    <location>
        <begin position="1"/>
        <end position="8"/>
    </location>
</feature>
<feature type="transmembrane region" description="Helical" evidence="2">
    <location>
        <begin position="9"/>
        <end position="29"/>
    </location>
</feature>
<feature type="topological domain" description="Lumenal" evidence="1">
    <location>
        <begin position="30"/>
        <end position="40"/>
    </location>
</feature>
<feature type="transmembrane region" description="Helical" evidence="2">
    <location>
        <begin position="41"/>
        <end position="61"/>
    </location>
</feature>
<feature type="topological domain" description="Cytoplasmic" evidence="1">
    <location>
        <begin position="62"/>
        <end position="78"/>
    </location>
</feature>
<feature type="transmembrane region" description="Helical" evidence="2">
    <location>
        <begin position="79"/>
        <end position="101"/>
    </location>
</feature>
<feature type="topological domain" description="Lumenal" evidence="1">
    <location>
        <begin position="102"/>
        <end position="104"/>
    </location>
</feature>
<feature type="transmembrane region" description="Helical" evidence="2">
    <location>
        <begin position="105"/>
        <end position="127"/>
    </location>
</feature>
<feature type="topological domain" description="Cytoplasmic" evidence="1">
    <location>
        <begin position="128"/>
        <end position="131"/>
    </location>
</feature>
<feature type="transmembrane region" description="Helical" evidence="2">
    <location>
        <begin position="132"/>
        <end position="150"/>
    </location>
</feature>
<feature type="topological domain" description="Lumenal" evidence="1">
    <location>
        <begin position="151"/>
        <end position="161"/>
    </location>
</feature>
<feature type="transmembrane region" description="Helical" evidence="2">
    <location>
        <begin position="162"/>
        <end position="182"/>
    </location>
</feature>
<feature type="topological domain" description="Cytoplasmic" evidence="1">
    <location>
        <begin position="183"/>
        <end position="194"/>
    </location>
</feature>
<feature type="transmembrane region" description="Helical" evidence="2">
    <location>
        <begin position="195"/>
        <end position="215"/>
    </location>
</feature>
<feature type="topological domain" description="Lumenal" evidence="1">
    <location>
        <begin position="216"/>
        <end position="233"/>
    </location>
</feature>
<feature type="transmembrane region" description="Helical" evidence="2">
    <location>
        <begin position="234"/>
        <end position="254"/>
    </location>
</feature>
<feature type="topological domain" description="Cytoplasmic" evidence="1">
    <location>
        <begin position="255"/>
        <end position="264"/>
    </location>
</feature>
<feature type="transmembrane region" description="Helical" evidence="2">
    <location>
        <begin position="265"/>
        <end position="285"/>
    </location>
</feature>
<feature type="topological domain" description="Lumenal" evidence="1">
    <location>
        <begin position="286"/>
        <end position="288"/>
    </location>
</feature>
<feature type="transmembrane region" description="Helical" evidence="2">
    <location>
        <begin position="289"/>
        <end position="309"/>
    </location>
</feature>
<feature type="topological domain" description="Cytoplasmic" evidence="1">
    <location>
        <begin position="310"/>
        <end position="345"/>
    </location>
</feature>
<feature type="region of interest" description="Disordered" evidence="3">
    <location>
        <begin position="319"/>
        <end position="345"/>
    </location>
</feature>
<feature type="compositionally biased region" description="Polar residues" evidence="3">
    <location>
        <begin position="329"/>
        <end position="345"/>
    </location>
</feature>
<reference evidence="4" key="1">
    <citation type="journal article" date="2002" name="Nature">
        <title>The genome sequence of Schizosaccharomyces pombe.</title>
        <authorList>
            <person name="Wood V."/>
            <person name="Gwilliam R."/>
            <person name="Rajandream M.A."/>
            <person name="Lyne M.H."/>
            <person name="Lyne R."/>
            <person name="Stewart A."/>
            <person name="Sgouros J.G."/>
            <person name="Peat N."/>
            <person name="Hayles J."/>
            <person name="Baker S.G."/>
            <person name="Basham D."/>
            <person name="Bowman S."/>
            <person name="Brooks K."/>
            <person name="Brown D."/>
            <person name="Brown S."/>
            <person name="Chillingworth T."/>
            <person name="Churcher C.M."/>
            <person name="Collins M."/>
            <person name="Connor R."/>
            <person name="Cronin A."/>
            <person name="Davis P."/>
            <person name="Feltwell T."/>
            <person name="Fraser A."/>
            <person name="Gentles S."/>
            <person name="Goble A."/>
            <person name="Hamlin N."/>
            <person name="Harris D.E."/>
            <person name="Hidalgo J."/>
            <person name="Hodgson G."/>
            <person name="Holroyd S."/>
            <person name="Hornsby T."/>
            <person name="Howarth S."/>
            <person name="Huckle E.J."/>
            <person name="Hunt S."/>
            <person name="Jagels K."/>
            <person name="James K.D."/>
            <person name="Jones L."/>
            <person name="Jones M."/>
            <person name="Leather S."/>
            <person name="McDonald S."/>
            <person name="McLean J."/>
            <person name="Mooney P."/>
            <person name="Moule S."/>
            <person name="Mungall K.L."/>
            <person name="Murphy L.D."/>
            <person name="Niblett D."/>
            <person name="Odell C."/>
            <person name="Oliver K."/>
            <person name="O'Neil S."/>
            <person name="Pearson D."/>
            <person name="Quail M.A."/>
            <person name="Rabbinowitsch E."/>
            <person name="Rutherford K.M."/>
            <person name="Rutter S."/>
            <person name="Saunders D."/>
            <person name="Seeger K."/>
            <person name="Sharp S."/>
            <person name="Skelton J."/>
            <person name="Simmonds M.N."/>
            <person name="Squares R."/>
            <person name="Squares S."/>
            <person name="Stevens K."/>
            <person name="Taylor K."/>
            <person name="Taylor R.G."/>
            <person name="Tivey A."/>
            <person name="Walsh S.V."/>
            <person name="Warren T."/>
            <person name="Whitehead S."/>
            <person name="Woodward J.R."/>
            <person name="Volckaert G."/>
            <person name="Aert R."/>
            <person name="Robben J."/>
            <person name="Grymonprez B."/>
            <person name="Weltjens I."/>
            <person name="Vanstreels E."/>
            <person name="Rieger M."/>
            <person name="Schaefer M."/>
            <person name="Mueller-Auer S."/>
            <person name="Gabel C."/>
            <person name="Fuchs M."/>
            <person name="Duesterhoeft A."/>
            <person name="Fritzc C."/>
            <person name="Holzer E."/>
            <person name="Moestl D."/>
            <person name="Hilbert H."/>
            <person name="Borzym K."/>
            <person name="Langer I."/>
            <person name="Beck A."/>
            <person name="Lehrach H."/>
            <person name="Reinhardt R."/>
            <person name="Pohl T.M."/>
            <person name="Eger P."/>
            <person name="Zimmermann W."/>
            <person name="Wedler H."/>
            <person name="Wambutt R."/>
            <person name="Purnelle B."/>
            <person name="Goffeau A."/>
            <person name="Cadieu E."/>
            <person name="Dreano S."/>
            <person name="Gloux S."/>
            <person name="Lelaure V."/>
            <person name="Mottier S."/>
            <person name="Galibert F."/>
            <person name="Aves S.J."/>
            <person name="Xiang Z."/>
            <person name="Hunt C."/>
            <person name="Moore K."/>
            <person name="Hurst S.M."/>
            <person name="Lucas M."/>
            <person name="Rochet M."/>
            <person name="Gaillardin C."/>
            <person name="Tallada V.A."/>
            <person name="Garzon A."/>
            <person name="Thode G."/>
            <person name="Daga R.R."/>
            <person name="Cruzado L."/>
            <person name="Jimenez J."/>
            <person name="Sanchez M."/>
            <person name="del Rey F."/>
            <person name="Benito J."/>
            <person name="Dominguez A."/>
            <person name="Revuelta J.L."/>
            <person name="Moreno S."/>
            <person name="Armstrong J."/>
            <person name="Forsburg S.L."/>
            <person name="Cerutti L."/>
            <person name="Lowe T."/>
            <person name="McCombie W.R."/>
            <person name="Paulsen I."/>
            <person name="Potashkin J."/>
            <person name="Shpakovski G.V."/>
            <person name="Ussery D."/>
            <person name="Barrell B.G."/>
            <person name="Nurse P."/>
        </authorList>
    </citation>
    <scope>NUCLEOTIDE SEQUENCE [LARGE SCALE GENOMIC DNA]</scope>
    <source>
        <strain>972 / ATCC 24843</strain>
    </source>
</reference>
<keyword id="KW-0968">Cytoplasmic vesicle</keyword>
<keyword id="KW-0256">Endoplasmic reticulum</keyword>
<keyword id="KW-0333">Golgi apparatus</keyword>
<keyword id="KW-0472">Membrane</keyword>
<keyword id="KW-1185">Reference proteome</keyword>
<keyword id="KW-0762">Sugar transport</keyword>
<keyword id="KW-0812">Transmembrane</keyword>
<keyword id="KW-1133">Transmembrane helix</keyword>
<keyword id="KW-0813">Transport</keyword>
<proteinExistence type="inferred from homology"/>
<comment type="function">
    <text evidence="1">Involved in the import of GDP-mannose from the cytoplasm into the Golgi lumen.</text>
</comment>
<comment type="subunit">
    <text evidence="1">Homooligomer.</text>
</comment>
<comment type="subcellular location">
    <subcellularLocation>
        <location evidence="1">Golgi apparatus membrane</location>
        <topology evidence="1">Multi-pass membrane protein</topology>
    </subcellularLocation>
    <subcellularLocation>
        <location evidence="1">Cytoplasmic vesicle membrane</location>
        <topology evidence="1">Multi-pass membrane protein</topology>
    </subcellularLocation>
    <subcellularLocation>
        <location evidence="1">Endoplasmic reticulum membrane</location>
        <topology evidence="1">Multi-pass membrane protein</topology>
    </subcellularLocation>
</comment>
<comment type="similarity">
    <text evidence="2">Belongs to the TPT transporter family. SLC35D subfamily.</text>
</comment>
<dbReference type="EMBL" id="CU329670">
    <property type="protein sequence ID" value="CAB59698.1"/>
    <property type="molecule type" value="Genomic_DNA"/>
</dbReference>
<dbReference type="PIR" id="T37685">
    <property type="entry name" value="T37685"/>
</dbReference>
<dbReference type="RefSeq" id="NP_594679.1">
    <property type="nucleotide sequence ID" value="NM_001020108.2"/>
</dbReference>
<dbReference type="SMR" id="Q9UTK8"/>
<dbReference type="BioGRID" id="279296">
    <property type="interactions" value="3"/>
</dbReference>
<dbReference type="FunCoup" id="Q9UTK8">
    <property type="interactions" value="235"/>
</dbReference>
<dbReference type="STRING" id="284812.Q9UTK8"/>
<dbReference type="iPTMnet" id="Q9UTK8"/>
<dbReference type="PaxDb" id="4896-SPAC144.18.1"/>
<dbReference type="EnsemblFungi" id="SPAC144.18.1">
    <property type="protein sequence ID" value="SPAC144.18.1:pep"/>
    <property type="gene ID" value="SPAC144.18"/>
</dbReference>
<dbReference type="GeneID" id="2542850"/>
<dbReference type="KEGG" id="spo:2542850"/>
<dbReference type="PomBase" id="SPAC144.18">
    <property type="gene designation" value="vrg4"/>
</dbReference>
<dbReference type="VEuPathDB" id="FungiDB:SPAC144.18"/>
<dbReference type="eggNOG" id="KOG1444">
    <property type="taxonomic scope" value="Eukaryota"/>
</dbReference>
<dbReference type="HOGENOM" id="CLU_025360_1_2_1"/>
<dbReference type="InParanoid" id="Q9UTK8"/>
<dbReference type="OMA" id="VWMLINC"/>
<dbReference type="PhylomeDB" id="Q9UTK8"/>
<dbReference type="PRO" id="PR:Q9UTK8"/>
<dbReference type="Proteomes" id="UP000002485">
    <property type="component" value="Chromosome I"/>
</dbReference>
<dbReference type="GO" id="GO:0030659">
    <property type="term" value="C:cytoplasmic vesicle membrane"/>
    <property type="evidence" value="ECO:0007669"/>
    <property type="project" value="UniProtKB-SubCell"/>
</dbReference>
<dbReference type="GO" id="GO:0005789">
    <property type="term" value="C:endoplasmic reticulum membrane"/>
    <property type="evidence" value="ECO:0007669"/>
    <property type="project" value="UniProtKB-SubCell"/>
</dbReference>
<dbReference type="GO" id="GO:0005794">
    <property type="term" value="C:Golgi apparatus"/>
    <property type="evidence" value="ECO:0000314"/>
    <property type="project" value="PomBase"/>
</dbReference>
<dbReference type="GO" id="GO:0000139">
    <property type="term" value="C:Golgi membrane"/>
    <property type="evidence" value="ECO:0000269"/>
    <property type="project" value="PomBase"/>
</dbReference>
<dbReference type="GO" id="GO:0015297">
    <property type="term" value="F:antiporter activity"/>
    <property type="evidence" value="ECO:0000318"/>
    <property type="project" value="GO_Central"/>
</dbReference>
<dbReference type="GO" id="GO:0005458">
    <property type="term" value="F:GDP-mannose transmembrane transporter activity"/>
    <property type="evidence" value="ECO:0000315"/>
    <property type="project" value="PomBase"/>
</dbReference>
<dbReference type="GO" id="GO:1990570">
    <property type="term" value="P:GDP-mannose transmembrane transport"/>
    <property type="evidence" value="ECO:0000315"/>
    <property type="project" value="PomBase"/>
</dbReference>
<dbReference type="InterPro" id="IPR050186">
    <property type="entry name" value="TPT_transporter"/>
</dbReference>
<dbReference type="NCBIfam" id="TIGR00803">
    <property type="entry name" value="nst"/>
    <property type="match status" value="1"/>
</dbReference>
<dbReference type="PANTHER" id="PTHR11132">
    <property type="entry name" value="SOLUTE CARRIER FAMILY 35"/>
    <property type="match status" value="1"/>
</dbReference>
<dbReference type="SUPFAM" id="SSF103481">
    <property type="entry name" value="Multidrug resistance efflux transporter EmrE"/>
    <property type="match status" value="1"/>
</dbReference>
<accession>Q9UTK8</accession>
<organism>
    <name type="scientific">Schizosaccharomyces pombe (strain 972 / ATCC 24843)</name>
    <name type="common">Fission yeast</name>
    <dbReference type="NCBI Taxonomy" id="284812"/>
    <lineage>
        <taxon>Eukaryota</taxon>
        <taxon>Fungi</taxon>
        <taxon>Dikarya</taxon>
        <taxon>Ascomycota</taxon>
        <taxon>Taphrinomycotina</taxon>
        <taxon>Schizosaccharomycetes</taxon>
        <taxon>Schizosaccharomycetales</taxon>
        <taxon>Schizosaccharomycetaceae</taxon>
        <taxon>Schizosaccharomyces</taxon>
    </lineage>
</organism>
<gene>
    <name type="primary">vrg4</name>
    <name type="ORF">SPAC144.18</name>
</gene>
<protein>
    <recommendedName>
        <fullName>GDP-mannose transporter</fullName>
        <shortName>GMT</shortName>
    </recommendedName>
</protein>
<name>GMT_SCHPO</name>
<evidence type="ECO:0000250" key="1"/>
<evidence type="ECO:0000255" key="2"/>
<evidence type="ECO:0000256" key="3">
    <source>
        <dbReference type="SAM" id="MobiDB-lite"/>
    </source>
</evidence>
<evidence type="ECO:0000312" key="4">
    <source>
        <dbReference type="EMBL" id="CAB59698.1"/>
    </source>
</evidence>